<evidence type="ECO:0000250" key="1">
    <source>
        <dbReference type="UniProtKB" id="Q9SI37"/>
    </source>
</evidence>
<evidence type="ECO:0000255" key="2">
    <source>
        <dbReference type="PROSITE-ProRule" id="PRU00223"/>
    </source>
</evidence>
<evidence type="ECO:0000256" key="3">
    <source>
        <dbReference type="SAM" id="MobiDB-lite"/>
    </source>
</evidence>
<evidence type="ECO:0000269" key="4">
    <source>
    </source>
</evidence>
<evidence type="ECO:0000269" key="5">
    <source>
    </source>
</evidence>
<evidence type="ECO:0000269" key="6">
    <source>
    </source>
</evidence>
<evidence type="ECO:0000269" key="7">
    <source>
    </source>
</evidence>
<evidence type="ECO:0000269" key="8">
    <source>
    </source>
</evidence>
<evidence type="ECO:0000269" key="9">
    <source>
    </source>
</evidence>
<evidence type="ECO:0000305" key="10"/>
<evidence type="ECO:0000305" key="11">
    <source>
    </source>
</evidence>
<name>WRK25_ARATH</name>
<gene>
    <name type="primary">WRKY25</name>
    <name type="ordered locus">At2g30250</name>
    <name type="ORF">T9D9.6</name>
</gene>
<protein>
    <recommendedName>
        <fullName>Probable WRKY transcription factor 25</fullName>
    </recommendedName>
    <alternativeName>
        <fullName>WRKY DNA-binding protein 25</fullName>
    </alternativeName>
</protein>
<organism>
    <name type="scientific">Arabidopsis thaliana</name>
    <name type="common">Mouse-ear cress</name>
    <dbReference type="NCBI Taxonomy" id="3702"/>
    <lineage>
        <taxon>Eukaryota</taxon>
        <taxon>Viridiplantae</taxon>
        <taxon>Streptophyta</taxon>
        <taxon>Embryophyta</taxon>
        <taxon>Tracheophyta</taxon>
        <taxon>Spermatophyta</taxon>
        <taxon>Magnoliopsida</taxon>
        <taxon>eudicotyledons</taxon>
        <taxon>Gunneridae</taxon>
        <taxon>Pentapetalae</taxon>
        <taxon>rosids</taxon>
        <taxon>malvids</taxon>
        <taxon>Brassicales</taxon>
        <taxon>Brassicaceae</taxon>
        <taxon>Camelineae</taxon>
        <taxon>Arabidopsis</taxon>
    </lineage>
</organism>
<dbReference type="EMBL" id="AF418309">
    <property type="protein sequence ID" value="AAL13040.1"/>
    <property type="molecule type" value="mRNA"/>
</dbReference>
<dbReference type="EMBL" id="AC002338">
    <property type="protein sequence ID" value="AAC16930.1"/>
    <property type="molecule type" value="Genomic_DNA"/>
</dbReference>
<dbReference type="EMBL" id="AC004165">
    <property type="protein sequence ID" value="AAM14918.1"/>
    <property type="molecule type" value="Genomic_DNA"/>
</dbReference>
<dbReference type="EMBL" id="CP002685">
    <property type="protein sequence ID" value="AEC08362.1"/>
    <property type="molecule type" value="Genomic_DNA"/>
</dbReference>
<dbReference type="EMBL" id="AY062720">
    <property type="protein sequence ID" value="AAL32798.1"/>
    <property type="molecule type" value="mRNA"/>
</dbReference>
<dbReference type="EMBL" id="AY114650">
    <property type="protein sequence ID" value="AAM47969.1"/>
    <property type="molecule type" value="mRNA"/>
</dbReference>
<dbReference type="EMBL" id="AY136318">
    <property type="protein sequence ID" value="AAM96984.1"/>
    <property type="molecule type" value="mRNA"/>
</dbReference>
<dbReference type="EMBL" id="AY045813">
    <property type="protein sequence ID" value="AAK76487.2"/>
    <property type="molecule type" value="mRNA"/>
</dbReference>
<dbReference type="EMBL" id="BT002338">
    <property type="protein sequence ID" value="AAN86171.1"/>
    <property type="molecule type" value="mRNA"/>
</dbReference>
<dbReference type="EMBL" id="BT008482">
    <property type="protein sequence ID" value="AAP37841.1"/>
    <property type="molecule type" value="mRNA"/>
</dbReference>
<dbReference type="PIR" id="T00575">
    <property type="entry name" value="T00575"/>
</dbReference>
<dbReference type="RefSeq" id="NP_180584.1">
    <property type="nucleotide sequence ID" value="NM_128578.4"/>
</dbReference>
<dbReference type="SMR" id="O22921"/>
<dbReference type="BioGRID" id="2924">
    <property type="interactions" value="19"/>
</dbReference>
<dbReference type="FunCoup" id="O22921">
    <property type="interactions" value="307"/>
</dbReference>
<dbReference type="IntAct" id="O22921">
    <property type="interactions" value="4"/>
</dbReference>
<dbReference type="STRING" id="3702.O22921"/>
<dbReference type="GlyGen" id="O22921">
    <property type="glycosylation" value="1 site"/>
</dbReference>
<dbReference type="PaxDb" id="3702-AT2G30250.1"/>
<dbReference type="ProteomicsDB" id="234413"/>
<dbReference type="EnsemblPlants" id="AT2G30250.1">
    <property type="protein sequence ID" value="AT2G30250.1"/>
    <property type="gene ID" value="AT2G30250"/>
</dbReference>
<dbReference type="GeneID" id="817575"/>
<dbReference type="Gramene" id="AT2G30250.1">
    <property type="protein sequence ID" value="AT2G30250.1"/>
    <property type="gene ID" value="AT2G30250"/>
</dbReference>
<dbReference type="KEGG" id="ath:AT2G30250"/>
<dbReference type="Araport" id="AT2G30250"/>
<dbReference type="TAIR" id="AT2G30250">
    <property type="gene designation" value="WRKY25"/>
</dbReference>
<dbReference type="eggNOG" id="ENOG502QRXJ">
    <property type="taxonomic scope" value="Eukaryota"/>
</dbReference>
<dbReference type="HOGENOM" id="CLU_012086_5_0_1"/>
<dbReference type="InParanoid" id="O22921"/>
<dbReference type="OMA" id="GVQDHQK"/>
<dbReference type="PhylomeDB" id="O22921"/>
<dbReference type="PRO" id="PR:O22921"/>
<dbReference type="Proteomes" id="UP000006548">
    <property type="component" value="Chromosome 2"/>
</dbReference>
<dbReference type="ExpressionAtlas" id="O22921">
    <property type="expression patterns" value="baseline and differential"/>
</dbReference>
<dbReference type="GO" id="GO:0005634">
    <property type="term" value="C:nucleus"/>
    <property type="evidence" value="ECO:0000314"/>
    <property type="project" value="TAIR"/>
</dbReference>
<dbReference type="GO" id="GO:0003700">
    <property type="term" value="F:DNA-binding transcription factor activity"/>
    <property type="evidence" value="ECO:0000250"/>
    <property type="project" value="TAIR"/>
</dbReference>
<dbReference type="GO" id="GO:0046872">
    <property type="term" value="F:metal ion binding"/>
    <property type="evidence" value="ECO:0007669"/>
    <property type="project" value="UniProtKB-KW"/>
</dbReference>
<dbReference type="GO" id="GO:0043565">
    <property type="term" value="F:sequence-specific DNA binding"/>
    <property type="evidence" value="ECO:0007669"/>
    <property type="project" value="InterPro"/>
</dbReference>
<dbReference type="GO" id="GO:0070370">
    <property type="term" value="P:cellular heat acclimation"/>
    <property type="evidence" value="ECO:0000315"/>
    <property type="project" value="TAIR"/>
</dbReference>
<dbReference type="GO" id="GO:0034605">
    <property type="term" value="P:cellular response to heat"/>
    <property type="evidence" value="ECO:0000315"/>
    <property type="project" value="TAIR"/>
</dbReference>
<dbReference type="GO" id="GO:0009409">
    <property type="term" value="P:response to cold"/>
    <property type="evidence" value="ECO:0000270"/>
    <property type="project" value="TAIR"/>
</dbReference>
<dbReference type="GO" id="GO:0006970">
    <property type="term" value="P:response to osmotic stress"/>
    <property type="evidence" value="ECO:0000270"/>
    <property type="project" value="TAIR"/>
</dbReference>
<dbReference type="GO" id="GO:0009651">
    <property type="term" value="P:response to salt stress"/>
    <property type="evidence" value="ECO:0000315"/>
    <property type="project" value="TAIR"/>
</dbReference>
<dbReference type="FunFam" id="2.20.25.80:FF:000006">
    <property type="entry name" value="WRKY transcription factor"/>
    <property type="match status" value="1"/>
</dbReference>
<dbReference type="FunFam" id="2.20.25.80:FF:000003">
    <property type="entry name" value="WRKY transcription factor 57"/>
    <property type="match status" value="1"/>
</dbReference>
<dbReference type="Gene3D" id="2.20.25.80">
    <property type="entry name" value="WRKY domain"/>
    <property type="match status" value="2"/>
</dbReference>
<dbReference type="InterPro" id="IPR003657">
    <property type="entry name" value="WRKY_dom"/>
</dbReference>
<dbReference type="InterPro" id="IPR036576">
    <property type="entry name" value="WRKY_dom_sf"/>
</dbReference>
<dbReference type="InterPro" id="IPR044810">
    <property type="entry name" value="WRKY_plant"/>
</dbReference>
<dbReference type="PANTHER" id="PTHR31221:SF229">
    <property type="entry name" value="WRKY TRANSCRIPTION FACTOR 25-RELATED"/>
    <property type="match status" value="1"/>
</dbReference>
<dbReference type="PANTHER" id="PTHR31221">
    <property type="entry name" value="WRKY TRANSCRIPTION FACTOR PROTEIN 1-RELATED"/>
    <property type="match status" value="1"/>
</dbReference>
<dbReference type="Pfam" id="PF03106">
    <property type="entry name" value="WRKY"/>
    <property type="match status" value="2"/>
</dbReference>
<dbReference type="SMART" id="SM00774">
    <property type="entry name" value="WRKY"/>
    <property type="match status" value="2"/>
</dbReference>
<dbReference type="SUPFAM" id="SSF118290">
    <property type="entry name" value="WRKY DNA-binding domain"/>
    <property type="match status" value="2"/>
</dbReference>
<dbReference type="PROSITE" id="PS50811">
    <property type="entry name" value="WRKY"/>
    <property type="match status" value="2"/>
</dbReference>
<reference key="1">
    <citation type="submission" date="2001-09" db="EMBL/GenBank/DDBJ databases">
        <title>Arabidopsis thaliana transcription factor WRKY25.</title>
        <authorList>
            <person name="Ulker B."/>
            <person name="Kushnir S."/>
            <person name="Somssich I.E."/>
        </authorList>
    </citation>
    <scope>NUCLEOTIDE SEQUENCE [MRNA]</scope>
    <source>
        <strain>cv. Columbia</strain>
        <tissue>Flower</tissue>
    </source>
</reference>
<reference key="2">
    <citation type="journal article" date="1999" name="Nature">
        <title>Sequence and analysis of chromosome 2 of the plant Arabidopsis thaliana.</title>
        <authorList>
            <person name="Lin X."/>
            <person name="Kaul S."/>
            <person name="Rounsley S.D."/>
            <person name="Shea T.P."/>
            <person name="Benito M.-I."/>
            <person name="Town C.D."/>
            <person name="Fujii C.Y."/>
            <person name="Mason T.M."/>
            <person name="Bowman C.L."/>
            <person name="Barnstead M.E."/>
            <person name="Feldblyum T.V."/>
            <person name="Buell C.R."/>
            <person name="Ketchum K.A."/>
            <person name="Lee J.J."/>
            <person name="Ronning C.M."/>
            <person name="Koo H.L."/>
            <person name="Moffat K.S."/>
            <person name="Cronin L.A."/>
            <person name="Shen M."/>
            <person name="Pai G."/>
            <person name="Van Aken S."/>
            <person name="Umayam L."/>
            <person name="Tallon L.J."/>
            <person name="Gill J.E."/>
            <person name="Adams M.D."/>
            <person name="Carrera A.J."/>
            <person name="Creasy T.H."/>
            <person name="Goodman H.M."/>
            <person name="Somerville C.R."/>
            <person name="Copenhaver G.P."/>
            <person name="Preuss D."/>
            <person name="Nierman W.C."/>
            <person name="White O."/>
            <person name="Eisen J.A."/>
            <person name="Salzberg S.L."/>
            <person name="Fraser C.M."/>
            <person name="Venter J.C."/>
        </authorList>
    </citation>
    <scope>NUCLEOTIDE SEQUENCE [LARGE SCALE GENOMIC DNA]</scope>
    <source>
        <strain>cv. Columbia</strain>
    </source>
</reference>
<reference key="3">
    <citation type="journal article" date="2017" name="Plant J.">
        <title>Araport11: a complete reannotation of the Arabidopsis thaliana reference genome.</title>
        <authorList>
            <person name="Cheng C.Y."/>
            <person name="Krishnakumar V."/>
            <person name="Chan A.P."/>
            <person name="Thibaud-Nissen F."/>
            <person name="Schobel S."/>
            <person name="Town C.D."/>
        </authorList>
    </citation>
    <scope>GENOME REANNOTATION</scope>
    <source>
        <strain>cv. Columbia</strain>
    </source>
</reference>
<reference key="4">
    <citation type="journal article" date="2003" name="Science">
        <title>Empirical analysis of transcriptional activity in the Arabidopsis genome.</title>
        <authorList>
            <person name="Yamada K."/>
            <person name="Lim J."/>
            <person name="Dale J.M."/>
            <person name="Chen H."/>
            <person name="Shinn P."/>
            <person name="Palm C.J."/>
            <person name="Southwick A.M."/>
            <person name="Wu H.C."/>
            <person name="Kim C.J."/>
            <person name="Nguyen M."/>
            <person name="Pham P.K."/>
            <person name="Cheuk R.F."/>
            <person name="Karlin-Newmann G."/>
            <person name="Liu S.X."/>
            <person name="Lam B."/>
            <person name="Sakano H."/>
            <person name="Wu T."/>
            <person name="Yu G."/>
            <person name="Miranda M."/>
            <person name="Quach H.L."/>
            <person name="Tripp M."/>
            <person name="Chang C.H."/>
            <person name="Lee J.M."/>
            <person name="Toriumi M.J."/>
            <person name="Chan M.M."/>
            <person name="Tang C.C."/>
            <person name="Onodera C.S."/>
            <person name="Deng J.M."/>
            <person name="Akiyama K."/>
            <person name="Ansari Y."/>
            <person name="Arakawa T."/>
            <person name="Banh J."/>
            <person name="Banno F."/>
            <person name="Bowser L."/>
            <person name="Brooks S.Y."/>
            <person name="Carninci P."/>
            <person name="Chao Q."/>
            <person name="Choy N."/>
            <person name="Enju A."/>
            <person name="Goldsmith A.D."/>
            <person name="Gurjal M."/>
            <person name="Hansen N.F."/>
            <person name="Hayashizaki Y."/>
            <person name="Johnson-Hopson C."/>
            <person name="Hsuan V.W."/>
            <person name="Iida K."/>
            <person name="Karnes M."/>
            <person name="Khan S."/>
            <person name="Koesema E."/>
            <person name="Ishida J."/>
            <person name="Jiang P.X."/>
            <person name="Jones T."/>
            <person name="Kawai J."/>
            <person name="Kamiya A."/>
            <person name="Meyers C."/>
            <person name="Nakajima M."/>
            <person name="Narusaka M."/>
            <person name="Seki M."/>
            <person name="Sakurai T."/>
            <person name="Satou M."/>
            <person name="Tamse R."/>
            <person name="Vaysberg M."/>
            <person name="Wallender E.K."/>
            <person name="Wong C."/>
            <person name="Yamamura Y."/>
            <person name="Yuan S."/>
            <person name="Shinozaki K."/>
            <person name="Davis R.W."/>
            <person name="Theologis A."/>
            <person name="Ecker J.R."/>
        </authorList>
    </citation>
    <scope>NUCLEOTIDE SEQUENCE [LARGE SCALE MRNA]</scope>
    <source>
        <strain>cv. Columbia</strain>
    </source>
</reference>
<reference key="5">
    <citation type="journal article" date="2005" name="EMBO J.">
        <title>The MAP kinase substrate MKS1 is a regulator of plant defense responses.</title>
        <authorList>
            <person name="Andreasson E."/>
            <person name="Jenkins T."/>
            <person name="Brodersen P."/>
            <person name="Thorgrimsen S."/>
            <person name="Petersen N.H.T."/>
            <person name="Zhu S."/>
            <person name="Qiu J.-L."/>
            <person name="Micheelsen P."/>
            <person name="Rocher A."/>
            <person name="Petersen M."/>
            <person name="Newman M.-A."/>
            <person name="Bjoern Nielsen H."/>
            <person name="Hirt H."/>
            <person name="Somssich I.E."/>
            <person name="Mattsson O."/>
            <person name="Mundy J."/>
        </authorList>
    </citation>
    <scope>INTERACTION WITH MKS1</scope>
    <scope>PHOSPHORYLATION</scope>
</reference>
<reference key="6">
    <citation type="journal article" date="2009" name="Plant Cell Rep.">
        <title>Functional analysis of an Arabidopsis transcription factor WRKY25 in heat stress.</title>
        <authorList>
            <person name="Li S."/>
            <person name="Fu Q."/>
            <person name="Huang W."/>
            <person name="Yu D."/>
        </authorList>
    </citation>
    <scope>FUNCTION</scope>
    <scope>INDUCTION BY HEAT</scope>
</reference>
<reference key="7">
    <citation type="journal article" date="2009" name="Plant Mol. Biol.">
        <title>Functional characterization of Arabidopsis NaCl-inducible WRKY25 and WRKY33 transcription factors in abiotic stresses.</title>
        <authorList>
            <person name="Jiang Y."/>
            <person name="Deyholos M.K."/>
        </authorList>
    </citation>
    <scope>FUNCTION</scope>
    <scope>SUBCELLULAR LOCATION</scope>
    <scope>TISSUE SPECIFICITY</scope>
    <scope>INDUCTION BY SALT</scope>
    <scope>DISRUPTION PHENOTYPE</scope>
</reference>
<reference key="8">
    <citation type="journal article" date="2011" name="Planta">
        <title>Arabidopsis thaliana WRKY25, WRKY26, and WRKY33 coordinate induction of plant thermotolerance.</title>
        <authorList>
            <person name="Li S."/>
            <person name="Fu Q."/>
            <person name="Chen L."/>
            <person name="Huang W."/>
            <person name="Yu D."/>
        </authorList>
    </citation>
    <scope>FUNCTION</scope>
</reference>
<reference key="9">
    <citation type="journal article" date="2011" name="Plant Cell">
        <title>Arabidopsis sigma factor binding proteins are activators of the WRKY33 transcription factor in plant defense.</title>
        <authorList>
            <person name="Lai Z."/>
            <person name="Li Y."/>
            <person name="Wang F."/>
            <person name="Cheng Y."/>
            <person name="Fan B."/>
            <person name="Yu J.Q."/>
            <person name="Chen Z."/>
        </authorList>
    </citation>
    <scope>INTERACTION WITH SIB1</scope>
</reference>
<reference key="10">
    <citation type="journal article" date="2012" name="Plant Physiol.">
        <title>Structural and functional analysis of VQ motif-containing proteins in Arabidopsis as interacting proteins of WRKY transcription factors.</title>
        <authorList>
            <person name="Cheng Y."/>
            <person name="Zhou Y."/>
            <person name="Yang Y."/>
            <person name="Chi Y.J."/>
            <person name="Zhou J."/>
            <person name="Chen J.Y."/>
            <person name="Wang F."/>
            <person name="Fan B."/>
            <person name="Shi K."/>
            <person name="Zhou Y.H."/>
            <person name="Yu J.Q."/>
            <person name="Chen Z."/>
        </authorList>
    </citation>
    <scope>INTERACTION WITH VQ10 AND CAMBP25/VQ15</scope>
</reference>
<proteinExistence type="evidence at protein level"/>
<keyword id="KW-0238">DNA-binding</keyword>
<keyword id="KW-0479">Metal-binding</keyword>
<keyword id="KW-0539">Nucleus</keyword>
<keyword id="KW-0597">Phosphoprotein</keyword>
<keyword id="KW-1185">Reference proteome</keyword>
<keyword id="KW-0677">Repeat</keyword>
<keyword id="KW-0346">Stress response</keyword>
<keyword id="KW-0804">Transcription</keyword>
<keyword id="KW-0805">Transcription regulation</keyword>
<keyword id="KW-0862">Zinc</keyword>
<comment type="function">
    <text evidence="1 5 6 7">Transcription factor. Interacts specifically with the W box (5'-(T)TGAC[CT]-3'), a frequently occurring elicitor-responsive cis-acting element (By similarity). Functions with WRKY33 as positive regulator of salt stress response and abscisic acid (ABA) signaling (PubMed:18839316). Plays a partial role in heat stress tolerance (PubMed:19125253). Functions with WRKY26 and WRKY33 as positive regulator of plant thermotolerance by partially participating in ethylene-response signal transduction pathway (PubMed:21336597).</text>
</comment>
<comment type="subunit">
    <text evidence="4 8 9">Interacts with MKS1 (PubMed:15990873). Interacts with SIB1 (PubMed:21990940). Interacts with VQ10 and CAMBP25/VQ15 (PubMed:22535423).</text>
</comment>
<comment type="interaction">
    <interactant intactId="EBI-1392386">
        <id>O22921</id>
    </interactant>
    <interactant intactId="EBI-1392198">
        <id>Q8LGD5</id>
        <label>MKS1</label>
    </interactant>
    <organismsDiffer>false</organismsDiffer>
    <experiments>3</experiments>
</comment>
<comment type="interaction">
    <interactant intactId="EBI-1392386">
        <id>O22921</id>
    </interactant>
    <interactant intactId="EBI-994375">
        <id>Q39024</id>
        <label>MPK4</label>
    </interactant>
    <organismsDiffer>false</organismsDiffer>
    <experiments>2</experiments>
</comment>
<comment type="subcellular location">
    <subcellularLocation>
        <location evidence="5">Nucleus</location>
    </subcellularLocation>
</comment>
<comment type="tissue specificity">
    <text evidence="5">Highly expressed in roots and at lower levels in leaves, stems and seeds.</text>
</comment>
<comment type="induction">
    <text evidence="5 6">By salt stress (PubMed:18839316). Induced by heat stress (PubMed:19125253).</text>
</comment>
<comment type="PTM">
    <text evidence="11">Phosphorylated by MPK4.</text>
</comment>
<comment type="disruption phenotype">
    <text evidence="5">No visible phenotype under normal growth conditions.</text>
</comment>
<comment type="similarity">
    <text evidence="10">Belongs to the WRKY group I family.</text>
</comment>
<feature type="chain" id="PRO_0000133667" description="Probable WRKY transcription factor 25">
    <location>
        <begin position="1"/>
        <end position="393"/>
    </location>
</feature>
<feature type="DNA-binding region" description="WRKY 1" evidence="2">
    <location>
        <begin position="160"/>
        <end position="224"/>
    </location>
</feature>
<feature type="DNA-binding region" description="WRKY 2" evidence="2">
    <location>
        <begin position="322"/>
        <end position="387"/>
    </location>
</feature>
<feature type="region of interest" description="Disordered" evidence="3">
    <location>
        <begin position="217"/>
        <end position="242"/>
    </location>
</feature>
<feature type="region of interest" description="Disordered" evidence="3">
    <location>
        <begin position="277"/>
        <end position="303"/>
    </location>
</feature>
<feature type="compositionally biased region" description="Polar residues" evidence="3">
    <location>
        <begin position="229"/>
        <end position="240"/>
    </location>
</feature>
<feature type="compositionally biased region" description="Basic and acidic residues" evidence="3">
    <location>
        <begin position="289"/>
        <end position="298"/>
    </location>
</feature>
<feature type="binding site" evidence="1">
    <location>
        <position position="191"/>
    </location>
    <ligand>
        <name>Zn(2+)</name>
        <dbReference type="ChEBI" id="CHEBI:29105"/>
    </ligand>
</feature>
<feature type="binding site" evidence="1">
    <location>
        <position position="196"/>
    </location>
    <ligand>
        <name>Zn(2+)</name>
        <dbReference type="ChEBI" id="CHEBI:29105"/>
    </ligand>
</feature>
<feature type="binding site" evidence="1">
    <location>
        <position position="219"/>
    </location>
    <ligand>
        <name>Zn(2+)</name>
        <dbReference type="ChEBI" id="CHEBI:29105"/>
    </ligand>
</feature>
<feature type="binding site" evidence="1">
    <location>
        <position position="221"/>
    </location>
    <ligand>
        <name>Zn(2+)</name>
        <dbReference type="ChEBI" id="CHEBI:29105"/>
    </ligand>
</feature>
<feature type="binding site" evidence="1">
    <location>
        <position position="353"/>
    </location>
    <ligand>
        <name>Zn(2+)</name>
        <dbReference type="ChEBI" id="CHEBI:29105"/>
    </ligand>
</feature>
<feature type="binding site" evidence="1">
    <location>
        <position position="358"/>
    </location>
    <ligand>
        <name>Zn(2+)</name>
        <dbReference type="ChEBI" id="CHEBI:29105"/>
    </ligand>
</feature>
<feature type="binding site" evidence="1">
    <location>
        <position position="382"/>
    </location>
    <ligand>
        <name>Zn(2+)</name>
        <dbReference type="ChEBI" id="CHEBI:29105"/>
    </ligand>
</feature>
<feature type="binding site" evidence="1">
    <location>
        <position position="384"/>
    </location>
    <ligand>
        <name>Zn(2+)</name>
        <dbReference type="ChEBI" id="CHEBI:29105"/>
    </ligand>
</feature>
<accession>O22921</accession>
<accession>Q94AT4</accession>
<sequence>MSSTSFTDLLGSSGVDCYEDDEDLRVSGSSFGGYYPERTGSGLPKFKTAQPPPLPISQSSHNFTFSDYLDSPLLLSSSHSLISPTTGTFPLQGFNGTTNNHSDFPWQLQSQPSNASSALQETYGVQDHEKKQEMIPNEIATQNNNQSFGTERQIKIPAYMVSRNSNDGYGWRKYGQKQVKKSENPRSYFKCTYPDCVSKKIVETASDGQITEIIYKGGHNHPKPEFTKRPSQSSLPSSVNGRRLFNPASVVSEPHDQSENSSISFDYSDLEQKSFKSEYGEIDEEEEQPEMKRMKREGEDEGMSIEVSKGVKEPRVVVQTISDIDVLIDGFRWRKYGQKVVKGNTNPRSYYKCTFQGCGVKKQVERSAADERAVLTTYEGRHNHDIPTALRRS</sequence>